<comment type="function">
    <text evidence="2 5 6 8">Cytosolic aldo-keto reductase that catalyzes the NADH and NADPH-dependent reduction of ketosteroids to hydroxysteroids (PubMed:19218247). Most probably acts as a reductase in vivo since the oxidase activity measured in vitro is inhibited by physiological concentrations of NADPH (PubMed:14672942). Displays a broad positional specificity acting on positions 3, 17 and 20 of steroids and regulates the metabolism of hormones like estrogens and androgens (PubMed:10998348). May also reduce conjugated steroids such as 5alpha-dihydrotestosterone sulfate (PubMed:19218247). Displays affinity for bile acids (PubMed:8486699).</text>
</comment>
<comment type="catalytic activity">
    <reaction evidence="2 3">
        <text>a 3alpha-hydroxysteroid + NADP(+) = a 3-oxosteroid + NADPH + H(+)</text>
        <dbReference type="Rhea" id="RHEA:34783"/>
        <dbReference type="ChEBI" id="CHEBI:15378"/>
        <dbReference type="ChEBI" id="CHEBI:36835"/>
        <dbReference type="ChEBI" id="CHEBI:47788"/>
        <dbReference type="ChEBI" id="CHEBI:57783"/>
        <dbReference type="ChEBI" id="CHEBI:58349"/>
        <dbReference type="EC" id="1.1.1.357"/>
    </reaction>
</comment>
<comment type="catalytic activity">
    <reaction evidence="2 3">
        <text>a 3alpha-hydroxysteroid + NAD(+) = a 3-oxosteroid + NADH + H(+)</text>
        <dbReference type="Rhea" id="RHEA:34779"/>
        <dbReference type="ChEBI" id="CHEBI:15378"/>
        <dbReference type="ChEBI" id="CHEBI:36835"/>
        <dbReference type="ChEBI" id="CHEBI:47788"/>
        <dbReference type="ChEBI" id="CHEBI:57540"/>
        <dbReference type="ChEBI" id="CHEBI:57945"/>
        <dbReference type="EC" id="1.1.1.357"/>
    </reaction>
</comment>
<comment type="catalytic activity">
    <reaction evidence="14">
        <text>(17R,20S)-17,20-dihydroxypregn-4-en-3-one + NADP(+) = 17alpha-hydroxyprogesterone + NADPH + H(+)</text>
        <dbReference type="Rhea" id="RHEA:15857"/>
        <dbReference type="ChEBI" id="CHEBI:15378"/>
        <dbReference type="ChEBI" id="CHEBI:16418"/>
        <dbReference type="ChEBI" id="CHEBI:17252"/>
        <dbReference type="ChEBI" id="CHEBI:57783"/>
        <dbReference type="ChEBI" id="CHEBI:58349"/>
        <dbReference type="EC" id="1.1.1.149"/>
    </reaction>
    <physiologicalReaction direction="right-to-left" evidence="14">
        <dbReference type="Rhea" id="RHEA:15859"/>
    </physiologicalReaction>
</comment>
<comment type="catalytic activity">
    <reaction evidence="14">
        <text>(17R,20S)-17,20-dihydroxypregn-4-en-3-one + NAD(+) = 17alpha-hydroxyprogesterone + NADH + H(+)</text>
        <dbReference type="Rhea" id="RHEA:15853"/>
        <dbReference type="ChEBI" id="CHEBI:15378"/>
        <dbReference type="ChEBI" id="CHEBI:16418"/>
        <dbReference type="ChEBI" id="CHEBI:17252"/>
        <dbReference type="ChEBI" id="CHEBI:57540"/>
        <dbReference type="ChEBI" id="CHEBI:57945"/>
        <dbReference type="EC" id="1.1.1.149"/>
    </reaction>
    <physiologicalReaction direction="right-to-left" evidence="14">
        <dbReference type="Rhea" id="RHEA:15855"/>
    </physiologicalReaction>
</comment>
<comment type="catalytic activity">
    <reaction evidence="2 3">
        <text>(20S)-hydroxypregn-4-en-3-one + NADP(+) = progesterone + NADPH + H(+)</text>
        <dbReference type="Rhea" id="RHEA:42112"/>
        <dbReference type="ChEBI" id="CHEBI:15378"/>
        <dbReference type="ChEBI" id="CHEBI:17026"/>
        <dbReference type="ChEBI" id="CHEBI:28453"/>
        <dbReference type="ChEBI" id="CHEBI:57783"/>
        <dbReference type="ChEBI" id="CHEBI:58349"/>
    </reaction>
    <physiologicalReaction direction="left-to-right" evidence="2 3">
        <dbReference type="Rhea" id="RHEA:42113"/>
    </physiologicalReaction>
    <physiologicalReaction direction="right-to-left" evidence="2">
        <dbReference type="Rhea" id="RHEA:42114"/>
    </physiologicalReaction>
</comment>
<comment type="catalytic activity">
    <reaction evidence="2">
        <text>(20S)-hydroxypregn-4-en-3-one + NAD(+) = progesterone + NADH + H(+)</text>
        <dbReference type="Rhea" id="RHEA:42108"/>
        <dbReference type="ChEBI" id="CHEBI:15378"/>
        <dbReference type="ChEBI" id="CHEBI:17026"/>
        <dbReference type="ChEBI" id="CHEBI:28453"/>
        <dbReference type="ChEBI" id="CHEBI:57540"/>
        <dbReference type="ChEBI" id="CHEBI:57945"/>
    </reaction>
    <physiologicalReaction direction="left-to-right" evidence="2 3">
        <dbReference type="Rhea" id="RHEA:42109"/>
    </physiologicalReaction>
    <physiologicalReaction direction="right-to-left" evidence="2 3">
        <dbReference type="Rhea" id="RHEA:42110"/>
    </physiologicalReaction>
</comment>
<comment type="catalytic activity">
    <reaction evidence="8 9">
        <text>(1R,2R)-1,2-dihydrobenzene-1,2-diol + NADP(+) = catechol + NADPH + H(+)</text>
        <dbReference type="Rhea" id="RHEA:16729"/>
        <dbReference type="ChEBI" id="CHEBI:10702"/>
        <dbReference type="ChEBI" id="CHEBI:15378"/>
        <dbReference type="ChEBI" id="CHEBI:18135"/>
        <dbReference type="ChEBI" id="CHEBI:57783"/>
        <dbReference type="ChEBI" id="CHEBI:58349"/>
        <dbReference type="EC" id="1.3.1.20"/>
    </reaction>
</comment>
<comment type="catalytic activity">
    <reaction evidence="9">
        <text>(S)-indan-1-ol + NAD(+) = indan-1-one + NADH + H(+)</text>
        <dbReference type="Rhea" id="RHEA:16317"/>
        <dbReference type="ChEBI" id="CHEBI:15378"/>
        <dbReference type="ChEBI" id="CHEBI:17404"/>
        <dbReference type="ChEBI" id="CHEBI:57540"/>
        <dbReference type="ChEBI" id="CHEBI:57945"/>
        <dbReference type="ChEBI" id="CHEBI:156384"/>
        <dbReference type="EC" id="1.1.1.112"/>
    </reaction>
</comment>
<comment type="catalytic activity">
    <reaction evidence="9">
        <text>(S)-indan-1-ol + NADP(+) = indan-1-one + NADPH + H(+)</text>
        <dbReference type="Rhea" id="RHEA:16321"/>
        <dbReference type="ChEBI" id="CHEBI:15378"/>
        <dbReference type="ChEBI" id="CHEBI:17404"/>
        <dbReference type="ChEBI" id="CHEBI:57783"/>
        <dbReference type="ChEBI" id="CHEBI:58349"/>
        <dbReference type="ChEBI" id="CHEBI:156384"/>
        <dbReference type="EC" id="1.1.1.112"/>
    </reaction>
</comment>
<comment type="catalytic activity">
    <reaction evidence="2 5">
        <text>5alpha-androstane-3alpha,17beta-diol + NADP(+) = 17beta-hydroxy-5alpha-androstan-3-one + NADPH + H(+)</text>
        <dbReference type="Rhea" id="RHEA:42116"/>
        <dbReference type="ChEBI" id="CHEBI:15378"/>
        <dbReference type="ChEBI" id="CHEBI:16330"/>
        <dbReference type="ChEBI" id="CHEBI:36713"/>
        <dbReference type="ChEBI" id="CHEBI:57783"/>
        <dbReference type="ChEBI" id="CHEBI:58349"/>
    </reaction>
    <physiologicalReaction direction="right-to-left" evidence="2 5">
        <dbReference type="Rhea" id="RHEA:42118"/>
    </physiologicalReaction>
</comment>
<comment type="catalytic activity">
    <reaction evidence="5 6">
        <text>5alpha-androstane-3beta,17beta-diol + NADP(+) = 17beta-hydroxy-5alpha-androstan-3-one + NADPH + H(+)</text>
        <dbReference type="Rhea" id="RHEA:16297"/>
        <dbReference type="ChEBI" id="CHEBI:15378"/>
        <dbReference type="ChEBI" id="CHEBI:16330"/>
        <dbReference type="ChEBI" id="CHEBI:18329"/>
        <dbReference type="ChEBI" id="CHEBI:57783"/>
        <dbReference type="ChEBI" id="CHEBI:58349"/>
        <dbReference type="EC" id="1.1.1.210"/>
    </reaction>
    <physiologicalReaction direction="right-to-left" evidence="5 6">
        <dbReference type="Rhea" id="RHEA:16299"/>
    </physiologicalReaction>
</comment>
<comment type="catalytic activity">
    <reaction evidence="2">
        <text>5alpha-androstane-3alpha,17beta-diol + NAD(+) = 17beta-hydroxy-5alpha-androstan-3-one + NADH + H(+)</text>
        <dbReference type="Rhea" id="RHEA:42004"/>
        <dbReference type="ChEBI" id="CHEBI:15378"/>
        <dbReference type="ChEBI" id="CHEBI:16330"/>
        <dbReference type="ChEBI" id="CHEBI:36713"/>
        <dbReference type="ChEBI" id="CHEBI:57540"/>
        <dbReference type="ChEBI" id="CHEBI:57945"/>
        <dbReference type="EC" id="1.1.1.53"/>
    </reaction>
    <physiologicalReaction direction="right-to-left" evidence="2">
        <dbReference type="Rhea" id="RHEA:42006"/>
    </physiologicalReaction>
</comment>
<comment type="catalytic activity">
    <reaction evidence="2">
        <text>17beta-hydroxy-5alpha-androstan-3-one + NADP(+) = 5alpha-androstan-3,17-dione + NADPH + H(+)</text>
        <dbReference type="Rhea" id="RHEA:42120"/>
        <dbReference type="ChEBI" id="CHEBI:15378"/>
        <dbReference type="ChEBI" id="CHEBI:15994"/>
        <dbReference type="ChEBI" id="CHEBI:16330"/>
        <dbReference type="ChEBI" id="CHEBI:57783"/>
        <dbReference type="ChEBI" id="CHEBI:58349"/>
    </reaction>
    <physiologicalReaction direction="right-to-left" evidence="13">
        <dbReference type="Rhea" id="RHEA:42122"/>
    </physiologicalReaction>
</comment>
<comment type="catalytic activity">
    <reaction evidence="2">
        <text>androsterone + NADP(+) = 5alpha-androstan-3,17-dione + NADPH + H(+)</text>
        <dbReference type="Rhea" id="RHEA:20377"/>
        <dbReference type="ChEBI" id="CHEBI:15378"/>
        <dbReference type="ChEBI" id="CHEBI:15994"/>
        <dbReference type="ChEBI" id="CHEBI:16032"/>
        <dbReference type="ChEBI" id="CHEBI:57783"/>
        <dbReference type="ChEBI" id="CHEBI:58349"/>
        <dbReference type="EC" id="1.1.1.209"/>
    </reaction>
    <physiologicalReaction direction="right-to-left" evidence="13">
        <dbReference type="Rhea" id="RHEA:20379"/>
    </physiologicalReaction>
</comment>
<comment type="catalytic activity">
    <reaction evidence="2">
        <text>androsterone + NADPH + H(+) = 5alpha-androstane-3alpha,17beta-diol + NADP(+)</text>
        <dbReference type="Rhea" id="RHEA:42156"/>
        <dbReference type="ChEBI" id="CHEBI:15378"/>
        <dbReference type="ChEBI" id="CHEBI:16032"/>
        <dbReference type="ChEBI" id="CHEBI:36713"/>
        <dbReference type="ChEBI" id="CHEBI:57783"/>
        <dbReference type="ChEBI" id="CHEBI:58349"/>
    </reaction>
    <physiologicalReaction direction="left-to-right" evidence="2">
        <dbReference type="Rhea" id="RHEA:42157"/>
    </physiologicalReaction>
    <physiologicalReaction direction="right-to-left" evidence="2">
        <dbReference type="Rhea" id="RHEA:42158"/>
    </physiologicalReaction>
</comment>
<comment type="catalytic activity">
    <reaction evidence="2">
        <text>5alpha-androstane-3alpha,17beta-diol + NAD(+) = androsterone + NADH + H(+)</text>
        <dbReference type="Rhea" id="RHEA:42124"/>
        <dbReference type="ChEBI" id="CHEBI:15378"/>
        <dbReference type="ChEBI" id="CHEBI:16032"/>
        <dbReference type="ChEBI" id="CHEBI:36713"/>
        <dbReference type="ChEBI" id="CHEBI:57540"/>
        <dbReference type="ChEBI" id="CHEBI:57945"/>
    </reaction>
    <physiologicalReaction direction="right-to-left" evidence="13">
        <dbReference type="Rhea" id="RHEA:42126"/>
    </physiologicalReaction>
</comment>
<comment type="catalytic activity">
    <reaction evidence="2">
        <text>17beta-estradiol + NADP(+) = estrone + NADPH + H(+)</text>
        <dbReference type="Rhea" id="RHEA:24616"/>
        <dbReference type="ChEBI" id="CHEBI:15378"/>
        <dbReference type="ChEBI" id="CHEBI:16469"/>
        <dbReference type="ChEBI" id="CHEBI:17263"/>
        <dbReference type="ChEBI" id="CHEBI:57783"/>
        <dbReference type="ChEBI" id="CHEBI:58349"/>
        <dbReference type="EC" id="1.1.1.62"/>
    </reaction>
    <physiologicalReaction direction="left-to-right" evidence="2">
        <dbReference type="Rhea" id="RHEA:24617"/>
    </physiologicalReaction>
    <physiologicalReaction direction="right-to-left" evidence="2">
        <dbReference type="Rhea" id="RHEA:24618"/>
    </physiologicalReaction>
</comment>
<comment type="catalytic activity">
    <reaction evidence="2">
        <text>17beta-estradiol + NAD(+) = estrone + NADH + H(+)</text>
        <dbReference type="Rhea" id="RHEA:24612"/>
        <dbReference type="ChEBI" id="CHEBI:15378"/>
        <dbReference type="ChEBI" id="CHEBI:16469"/>
        <dbReference type="ChEBI" id="CHEBI:17263"/>
        <dbReference type="ChEBI" id="CHEBI:57540"/>
        <dbReference type="ChEBI" id="CHEBI:57945"/>
        <dbReference type="EC" id="1.1.1.62"/>
    </reaction>
    <physiologicalReaction direction="left-to-right" evidence="2">
        <dbReference type="Rhea" id="RHEA:24613"/>
    </physiologicalReaction>
    <physiologicalReaction direction="right-to-left" evidence="2">
        <dbReference type="Rhea" id="RHEA:24614"/>
    </physiologicalReaction>
</comment>
<comment type="catalytic activity">
    <reaction evidence="2">
        <text>testosterone + NADP(+) = androst-4-ene-3,17-dione + NADPH + H(+)</text>
        <dbReference type="Rhea" id="RHEA:14981"/>
        <dbReference type="ChEBI" id="CHEBI:15378"/>
        <dbReference type="ChEBI" id="CHEBI:16422"/>
        <dbReference type="ChEBI" id="CHEBI:17347"/>
        <dbReference type="ChEBI" id="CHEBI:57783"/>
        <dbReference type="ChEBI" id="CHEBI:58349"/>
        <dbReference type="EC" id="1.1.1.51"/>
    </reaction>
    <physiologicalReaction direction="right-to-left" evidence="13">
        <dbReference type="Rhea" id="RHEA:14983"/>
    </physiologicalReaction>
</comment>
<comment type="catalytic activity">
    <reaction evidence="2">
        <text>20alpha-hydroxy-5beta-pregnan-3-one + NADP(+) = 5beta-pregnan-3,20-dione + NADPH + H(+)</text>
        <dbReference type="Rhea" id="RHEA:42168"/>
        <dbReference type="ChEBI" id="CHEBI:15378"/>
        <dbReference type="ChEBI" id="CHEBI:30154"/>
        <dbReference type="ChEBI" id="CHEBI:57783"/>
        <dbReference type="ChEBI" id="CHEBI:58349"/>
        <dbReference type="ChEBI" id="CHEBI:78666"/>
    </reaction>
    <physiologicalReaction direction="right-to-left" evidence="13">
        <dbReference type="Rhea" id="RHEA:42170"/>
    </physiologicalReaction>
</comment>
<comment type="catalytic activity">
    <reaction evidence="2">
        <text>3beta-hydroxy-5beta-pregnane-20-one + NADP(+) = 5beta-pregnan-3,20-dione + NADPH + H(+)</text>
        <dbReference type="Rhea" id="RHEA:22944"/>
        <dbReference type="ChEBI" id="CHEBI:15378"/>
        <dbReference type="ChEBI" id="CHEBI:16229"/>
        <dbReference type="ChEBI" id="CHEBI:30154"/>
        <dbReference type="ChEBI" id="CHEBI:57783"/>
        <dbReference type="ChEBI" id="CHEBI:58349"/>
    </reaction>
    <physiologicalReaction direction="right-to-left" evidence="13">
        <dbReference type="Rhea" id="RHEA:22946"/>
    </physiologicalReaction>
</comment>
<comment type="catalytic activity">
    <reaction evidence="2">
        <text>3beta-hydroxy-5beta-pregnane-20-one + NADPH + H(+) = 3beta,20alpha-dihydroxy-5beta-pregnane + NADP(+)</text>
        <dbReference type="Rhea" id="RHEA:65496"/>
        <dbReference type="ChEBI" id="CHEBI:15378"/>
        <dbReference type="ChEBI" id="CHEBI:16229"/>
        <dbReference type="ChEBI" id="CHEBI:57783"/>
        <dbReference type="ChEBI" id="CHEBI:58349"/>
        <dbReference type="ChEBI" id="CHEBI:156526"/>
    </reaction>
    <physiologicalReaction direction="left-to-right" evidence="2">
        <dbReference type="Rhea" id="RHEA:65497"/>
    </physiologicalReaction>
</comment>
<comment type="catalytic activity">
    <reaction evidence="6">
        <text>(3beta,5alpha,17beta)-3-hydroxyandrostan-17-yl sulfate + NADP(+) = 5alpha-dihydrotestosterone sulfate + NADPH + H(+)</text>
        <dbReference type="Rhea" id="RHEA:53120"/>
        <dbReference type="ChEBI" id="CHEBI:15378"/>
        <dbReference type="ChEBI" id="CHEBI:57783"/>
        <dbReference type="ChEBI" id="CHEBI:58349"/>
        <dbReference type="ChEBI" id="CHEBI:136982"/>
        <dbReference type="ChEBI" id="CHEBI:136983"/>
    </reaction>
    <physiologicalReaction direction="right-to-left" evidence="6">
        <dbReference type="Rhea" id="RHEA:53122"/>
    </physiologicalReaction>
</comment>
<comment type="activity regulation">
    <text evidence="5 9">Inhibited by hexestrol with an IC(50) of 9.5 uM, 1,10-phenanthroline with an IC(50) of 55 uM, 1,7-phenanthroline with an IC(50) of 72 uM, flufenamic acid with an IC(50) of 6.0 uM, indomethacin with an IC(50) of 140 uM, ibuprofen with an IC(50) of 950 uM, lithocholic acid with an IC(50) of 25 uM, ursodeoxycholic acid with an IC(50) of 340 uM and chenodeoxycholic acid with an IC(50) of 570 uM (PubMed:8573067). The oxidation reaction is inhibited by low micromolar concentrations of NADPH (PubMed:14672942).</text>
</comment>
<comment type="biophysicochemical properties">
    <kinetics>
        <KM evidence="9">5 uM for (s)-tetralol</KM>
        <KM evidence="9">38 uM for (s)-indan-1-ol</KM>
        <KM evidence="9">580 uM for benzene dihydrodiol ((1R,2R)-1,2-dihydrobenzene-1,2-diol)</KM>
        <KM evidence="9">3 uM for 5-beta-pregnane-3-alpha,20-alpha-diol</KM>
        <KM evidence="9">3 uM for 5-beta-pregnan-20-alpha-ol-3-one</KM>
        <KM evidence="9">12 uM for 4-pregnen-20-alpha-ol-3-one</KM>
        <KM evidence="9">133 uM for 9-alpha,11-beta-prostaglandin F(2)</KM>
        <KM evidence="9">2 uM for 5-beta-pregnan-3-alpha-ol-20-one</KM>
        <KM evidence="9">1 uM for 5-beta-androstane-3,17-dione</KM>
        <KM evidence="9">12 uM for prostaglandin D(2)</KM>
        <KM evidence="2">2.65 uM for progesterone (in the reduction assay)</KM>
        <KM evidence="2">16.2 uM for 3beta-hydroxy-5beta-pregnane-20-one (in the reduction assay)</KM>
        <KM evidence="2">14.7 uM for (20S)-hydroxypregn-4-en-3-one (in the oxidation assay)</KM>
        <KM evidence="2">80.6 uM for 17beta-hydroxy-5alpha-androstan-3-one (in the reduction assay)</KM>
        <KM evidence="6">4.2 uM for 17beta-hydroxy-5alpha-androstan-3-one (in the reduction assay)</KM>
        <KM evidence="2">31.7 uM for 17beta-hydroxy-5alpha-androstan-3-one (in the oxidation assay)</KM>
        <KM evidence="2">6.77 uM for 5alpha-androstan-3,17-dione (in the reduction assay)</KM>
        <KM evidence="2">41.7 uM for 3alpha-hydroxy-5alpha-androstan-17-one/androsterone (in the oxidation assay)</KM>
        <KM evidence="2">21 uM for 3alpha-hydroxy-5alpha-androstan-17-one/androsterone (in the reduction assay)</KM>
        <KM evidence="2">39.8 uM for testosterone (in the oxidation assay)</KM>
        <KM evidence="2">19.4 uM for 20alpha-hydroxy-5beta-pregnan-3-one (in the oxidation assay)</KM>
        <KM evidence="6">5.2 uM for 5alpha-dihydrotestosterone sulfate (in the reduction assay)</KM>
        <Vmax evidence="2">7.85 nmol/min/mg enzyme for the reduction of progesterone</Vmax>
        <Vmax evidence="2">29.7 nmol/min/mg enzyme for the reduction of 3beta-hydroxy-5beta-pregnane-20-one</Vmax>
        <Vmax evidence="2">31.9 nmol/min/mg enzyme for the oxidation of (20S)-hydroxypregn-4-en-3-one</Vmax>
        <Vmax evidence="2">18.0 nmol/min/mg enzyme for the reduction of 17beta-hydroxy-5alpha-androstan-3-one</Vmax>
        <Vmax evidence="2">0.72 nmol/min/mg enzyme for the oxidation of 17beta-hydroxy-5alpha-androstan-3-one</Vmax>
        <Vmax evidence="2">12.8 nmol/min/mg enzyme for the reduction of 5alpha-androstan-3,17-dione</Vmax>
        <Vmax evidence="2">1.59 nmol/min/mg enzyme for the oxidation of 3alpha-hydroxy-5alpha-androstan-17-one/androsterone</Vmax>
        <Vmax evidence="2">4.79 nmol/min/mg enzyme for the reduction of 3alpha-hydroxy-5alpha-androstan-17-one/androsterone</Vmax>
        <Vmax evidence="2">1.2 nmol/min/mg enzyme for the oxidation of testosterone</Vmax>
        <Vmax evidence="2">87.5 nmol/min/mg enzyme for the oxidation of 20alpha-hydroxy-5beta-pregnan-3-one</Vmax>
        <text evidence="2 6">kcat is 0.29 min-1 for the reduction of progesterone (PubMed:10998348). kcat is 1.1 min-1 for the reduction of 3beta-hydroxy-5beta-pregnane-20-one (PubMed:10998348). kcat is 1.2 min-1 for the oxidation of (20S)-hydroxypregn-4-en-3-one (PubMed:10998348). kcat is 0.66 min-1 for the reduction of 17beta-hydroxy-5alpha-androstan-3-one (PubMed:10998348). kcat is 0.026 min-1 for the oxidation of 17beta-hydroxy-5alpha-androstan-3-one (PubMed:10998348). kcat is 0.47 min-1 for the reduction of 5alpha-androstan-3,17-dione (PubMed:10998348). kcat is 0.06 min-1 for the oxidation of 3alpha-hydroxy-5alpha-androstan-17-one/androsterone (PubMed:10998348). kcat is 0.18 min-1 for the reduction of 3alpha-hydroxy-5alpha-androstan-17-one/androsterone (PubMed:10998348). kcat is 0.044 min-1 for the oxidation of testosterone (PubMed:10998348). kcat is 3.23 min-1 for the oxidation of 20alpha-hydroxy-5beta-pregnan-3-one (PubMed:10998348). kcat is 0.74 min-1 for the reduction of 17beta-hydroxy-5alpha-androstan-3-one (PubMed:19218247). kcat is 0.75 min-1 for the reduction of 5alpha-dihydrotestosterone sulfate (PubMed:19218247).</text>
    </kinetics>
</comment>
<comment type="pathway">
    <text evidence="5">Steroid metabolism.</text>
</comment>
<comment type="subunit">
    <text evidence="4 7">Monomer.</text>
</comment>
<comment type="interaction">
    <interactant intactId="EBI-2116455">
        <id>Q04828</id>
    </interactant>
    <interactant intactId="EBI-21559737">
        <id>P51857</id>
        <label>AKR1D1</label>
    </interactant>
    <organismsDiffer>false</organismsDiffer>
    <experiments>3</experiments>
</comment>
<comment type="interaction">
    <interactant intactId="EBI-2116455">
        <id>Q04828</id>
    </interactant>
    <interactant intactId="EBI-1047946">
        <id>P26045</id>
        <label>PTPN3</label>
    </interactant>
    <organismsDiffer>false</organismsDiffer>
    <experiments>6</experiments>
</comment>
<comment type="interaction">
    <interactant intactId="EBI-2116455">
        <id>Q04828</id>
    </interactant>
    <interactant intactId="EBI-5235340">
        <id>Q7Z699</id>
        <label>SPRED1</label>
    </interactant>
    <organismsDiffer>false</organismsDiffer>
    <experiments>3</experiments>
</comment>
<comment type="subcellular location">
    <subcellularLocation>
        <location evidence="8">Cytoplasm</location>
        <location evidence="8">Cytosol</location>
    </subcellularLocation>
</comment>
<comment type="tissue specificity">
    <text evidence="2 3">Expressed in all tissues tested including liver, prostate, testis, adrenal gland, brain, uterus, mammary gland and keratinocytes. Highest levels found in liver, mammary gland and brain.</text>
</comment>
<comment type="similarity">
    <text evidence="12">Belongs to the aldo/keto reductase family.</text>
</comment>
<reference key="1">
    <citation type="journal article" date="1993" name="J. Biol. Chem.">
        <title>cDNA cloning and expression of the human hepatic bile acid-binding protein. A member of the monomeric reductase gene family.</title>
        <authorList>
            <person name="Stolz A."/>
            <person name="Hammond L."/>
            <person name="Lou H."/>
            <person name="Takikawa H."/>
            <person name="Ronk M."/>
            <person name="Shively J.E."/>
        </authorList>
    </citation>
    <scope>NUCLEOTIDE SEQUENCE [MRNA]</scope>
    <scope>CATALYTIC ACTIVITY</scope>
    <scope>PARTIAL PROTEIN SEQUENCE</scope>
    <scope>SUBCELLULAR LOCATION</scope>
    <source>
        <tissue>Liver</tissue>
    </source>
</reference>
<reference key="2">
    <citation type="journal article" date="1994" name="J. Biol. Chem.">
        <title>Genomic organization and chromosomal localization of a novel human hepatic dihydrodiol dehydrogenase with high affinity bile acid binding.</title>
        <authorList>
            <person name="Lou H."/>
            <person name="Hammond L."/>
            <person name="Sharma V."/>
            <person name="Sparkes R.S."/>
            <person name="Lusis A.J."/>
            <person name="Stolz A."/>
        </authorList>
    </citation>
    <scope>NUCLEOTIDE SEQUENCE [GENOMIC DNA]</scope>
    <source>
        <tissue>Blood</tissue>
    </source>
</reference>
<reference key="3">
    <citation type="journal article" date="1994" name="J. Biol. Chem.">
        <title>Regulation of human dihydrodiol dehydrogenase by Michael acceptor xenobiotics.</title>
        <authorList>
            <person name="Ciaccio P.J."/>
            <person name="Jaiswal A.K."/>
            <person name="Tew K.D."/>
        </authorList>
    </citation>
    <scope>NUCLEOTIDE SEQUENCE [MRNA]</scope>
    <source>
        <tissue>Colon</tissue>
    </source>
</reference>
<reference key="4">
    <citation type="journal article" date="1995" name="J. Steroid Biochem. Mol. Biol.">
        <title>Distribution of 3 alpha-hydroxysteroid dehydrogenase in rat brain and molecular cloning of multiple cDNAs encoding structurally related proteins in humans.</title>
        <authorList>
            <person name="Khanna M."/>
            <person name="Qin K.-N."/>
            <person name="Cheng K.-C."/>
        </authorList>
    </citation>
    <scope>NUCLEOTIDE SEQUENCE [MRNA]</scope>
    <source>
        <tissue>Liver</tissue>
    </source>
</reference>
<reference key="5">
    <citation type="journal article" date="2000" name="Genes Cells">
        <title>Close kinship of human 20alpha-hydroxysteroid dehydrogenase gene with three aldo-keto reductase genes.</title>
        <authorList>
            <person name="Nishizawa M."/>
            <person name="Nakajima T."/>
            <person name="Yasuda K."/>
            <person name="Kanzaki H."/>
            <person name="Sasaguri Y."/>
            <person name="Watanabe K."/>
            <person name="Ito S."/>
        </authorList>
    </citation>
    <scope>NUCLEOTIDE SEQUENCE [MRNA]</scope>
    <source>
        <tissue>Liver</tissue>
    </source>
</reference>
<reference key="6">
    <citation type="journal article" date="2000" name="J. Mol. Endocrinol.">
        <title>Characterization of a human 20alpha-hydroxysteroid dehydrogenase.</title>
        <authorList>
            <person name="Zhang Y."/>
            <person name="Dufort I."/>
            <person name="Rheault P."/>
            <person name="Luu-The V."/>
        </authorList>
    </citation>
    <scope>NUCLEOTIDE SEQUENCE [MRNA]</scope>
    <scope>FUNCTION</scope>
    <scope>CATALYTIC ACTIVITY</scope>
    <scope>TISSUE SPECIFICITY</scope>
    <source>
        <tissue>Skin fibroblast</tissue>
    </source>
</reference>
<reference key="7">
    <citation type="submission" date="2003-05" db="EMBL/GenBank/DDBJ databases">
        <title>Cloning of human full-length CDSs in BD Creator(TM) system donor vector.</title>
        <authorList>
            <person name="Kalnine N."/>
            <person name="Chen X."/>
            <person name="Rolfs A."/>
            <person name="Halleck A."/>
            <person name="Hines L."/>
            <person name="Eisenstein S."/>
            <person name="Koundinya M."/>
            <person name="Raphael J."/>
            <person name="Moreira D."/>
            <person name="Kelley T."/>
            <person name="LaBaer J."/>
            <person name="Lin Y."/>
            <person name="Phelan M."/>
            <person name="Farmer A."/>
        </authorList>
    </citation>
    <scope>NUCLEOTIDE SEQUENCE [LARGE SCALE MRNA]</scope>
</reference>
<reference key="8">
    <citation type="journal article" date="2004" name="Nature">
        <title>The DNA sequence and comparative analysis of human chromosome 10.</title>
        <authorList>
            <person name="Deloukas P."/>
            <person name="Earthrowl M.E."/>
            <person name="Grafham D.V."/>
            <person name="Rubenfield M."/>
            <person name="French L."/>
            <person name="Steward C.A."/>
            <person name="Sims S.K."/>
            <person name="Jones M.C."/>
            <person name="Searle S."/>
            <person name="Scott C."/>
            <person name="Howe K."/>
            <person name="Hunt S.E."/>
            <person name="Andrews T.D."/>
            <person name="Gilbert J.G.R."/>
            <person name="Swarbreck D."/>
            <person name="Ashurst J.L."/>
            <person name="Taylor A."/>
            <person name="Battles J."/>
            <person name="Bird C.P."/>
            <person name="Ainscough R."/>
            <person name="Almeida J.P."/>
            <person name="Ashwell R.I.S."/>
            <person name="Ambrose K.D."/>
            <person name="Babbage A.K."/>
            <person name="Bagguley C.L."/>
            <person name="Bailey J."/>
            <person name="Banerjee R."/>
            <person name="Bates K."/>
            <person name="Beasley H."/>
            <person name="Bray-Allen S."/>
            <person name="Brown A.J."/>
            <person name="Brown J.Y."/>
            <person name="Burford D.C."/>
            <person name="Burrill W."/>
            <person name="Burton J."/>
            <person name="Cahill P."/>
            <person name="Camire D."/>
            <person name="Carter N.P."/>
            <person name="Chapman J.C."/>
            <person name="Clark S.Y."/>
            <person name="Clarke G."/>
            <person name="Clee C.M."/>
            <person name="Clegg S."/>
            <person name="Corby N."/>
            <person name="Coulson A."/>
            <person name="Dhami P."/>
            <person name="Dutta I."/>
            <person name="Dunn M."/>
            <person name="Faulkner L."/>
            <person name="Frankish A."/>
            <person name="Frankland J.A."/>
            <person name="Garner P."/>
            <person name="Garnett J."/>
            <person name="Gribble S."/>
            <person name="Griffiths C."/>
            <person name="Grocock R."/>
            <person name="Gustafson E."/>
            <person name="Hammond S."/>
            <person name="Harley J.L."/>
            <person name="Hart E."/>
            <person name="Heath P.D."/>
            <person name="Ho T.P."/>
            <person name="Hopkins B."/>
            <person name="Horne J."/>
            <person name="Howden P.J."/>
            <person name="Huckle E."/>
            <person name="Hynds C."/>
            <person name="Johnson C."/>
            <person name="Johnson D."/>
            <person name="Kana A."/>
            <person name="Kay M."/>
            <person name="Kimberley A.M."/>
            <person name="Kershaw J.K."/>
            <person name="Kokkinaki M."/>
            <person name="Laird G.K."/>
            <person name="Lawlor S."/>
            <person name="Lee H.M."/>
            <person name="Leongamornlert D.A."/>
            <person name="Laird G."/>
            <person name="Lloyd C."/>
            <person name="Lloyd D.M."/>
            <person name="Loveland J."/>
            <person name="Lovell J."/>
            <person name="McLaren S."/>
            <person name="McLay K.E."/>
            <person name="McMurray A."/>
            <person name="Mashreghi-Mohammadi M."/>
            <person name="Matthews L."/>
            <person name="Milne S."/>
            <person name="Nickerson T."/>
            <person name="Nguyen M."/>
            <person name="Overton-Larty E."/>
            <person name="Palmer S.A."/>
            <person name="Pearce A.V."/>
            <person name="Peck A.I."/>
            <person name="Pelan S."/>
            <person name="Phillimore B."/>
            <person name="Porter K."/>
            <person name="Rice C.M."/>
            <person name="Rogosin A."/>
            <person name="Ross M.T."/>
            <person name="Sarafidou T."/>
            <person name="Sehra H.K."/>
            <person name="Shownkeen R."/>
            <person name="Skuce C.D."/>
            <person name="Smith M."/>
            <person name="Standring L."/>
            <person name="Sycamore N."/>
            <person name="Tester J."/>
            <person name="Thorpe A."/>
            <person name="Torcasso W."/>
            <person name="Tracey A."/>
            <person name="Tromans A."/>
            <person name="Tsolas J."/>
            <person name="Wall M."/>
            <person name="Walsh J."/>
            <person name="Wang H."/>
            <person name="Weinstock K."/>
            <person name="West A.P."/>
            <person name="Willey D.L."/>
            <person name="Whitehead S.L."/>
            <person name="Wilming L."/>
            <person name="Wray P.W."/>
            <person name="Young L."/>
            <person name="Chen Y."/>
            <person name="Lovering R.C."/>
            <person name="Moschonas N.K."/>
            <person name="Siebert R."/>
            <person name="Fechtel K."/>
            <person name="Bentley D."/>
            <person name="Durbin R.M."/>
            <person name="Hubbard T."/>
            <person name="Doucette-Stamm L."/>
            <person name="Beck S."/>
            <person name="Smith D.R."/>
            <person name="Rogers J."/>
        </authorList>
    </citation>
    <scope>NUCLEOTIDE SEQUENCE [LARGE SCALE GENOMIC DNA]</scope>
</reference>
<reference key="9">
    <citation type="journal article" date="2004" name="Genome Res.">
        <title>The status, quality, and expansion of the NIH full-length cDNA project: the Mammalian Gene Collection (MGC).</title>
        <authorList>
            <consortium name="The MGC Project Team"/>
        </authorList>
    </citation>
    <scope>NUCLEOTIDE SEQUENCE [LARGE SCALE MRNA]</scope>
    <source>
        <tissue>Lung</tissue>
        <tissue>Testis</tissue>
    </source>
</reference>
<reference key="10">
    <citation type="journal article" date="1993" name="J. Steroid Biochem. Mol. Biol.">
        <title>Molecular cloning of multiple cDNAs encoding human enzymes structurally related to 3 alpha-hydroxysteroid dehydrogenase.</title>
        <authorList>
            <person name="Qin K.-N."/>
            <person name="New M.I."/>
            <person name="Cheng K.-C."/>
        </authorList>
    </citation>
    <scope>NUCLEOTIDE SEQUENCE [MRNA] OF 4-323</scope>
    <source>
        <tissue>Liver</tissue>
    </source>
</reference>
<reference key="11">
    <citation type="journal article" date="1996" name="Biochem. J.">
        <title>Relationship of human liver dihydrodiol dehydrogenases to hepatic bile-acid-binding protein and an oxidoreductase of human colon cells.</title>
        <authorList>
            <person name="Hara A."/>
            <person name="Matsuura K."/>
            <person name="Tamada Y."/>
            <person name="Sato K."/>
            <person name="Miyabe Y."/>
            <person name="Deyashiki Y."/>
            <person name="Ishida N."/>
        </authorList>
    </citation>
    <scope>PROTEIN SEQUENCE OF 10-31; 40-61; 69-126; 137-153; 162-206; 209-230; 250-267; 271-289 AND 295-323</scope>
    <scope>FUNCTION</scope>
    <scope>CATALYTIC ACTIVITY</scope>
    <scope>ACTIVITY REGULATION</scope>
    <scope>BIOPHYSICOCHEMICAL PROPERTIES</scope>
</reference>
<reference key="12">
    <citation type="journal article" date="1994" name="Biochem. J.">
        <title>Molecular cloning of two human liver 3 alpha-hydroxysteroid/dihydrodiol dehydrogenase isoenzymes that are identical with chlordecone reductase and bile-acid binder.</title>
        <authorList>
            <person name="Deyashiki Y."/>
            <person name="Ogasawara A."/>
            <person name="Nakayama T."/>
            <person name="Nakanishi M."/>
            <person name="Miyabe Y."/>
            <person name="Sato K."/>
            <person name="Hara A."/>
        </authorList>
    </citation>
    <scope>NUCLEOTIDE SEQUENCE [MRNA] OF 18-323</scope>
    <scope>PROTEIN SEQUENCE OF 18-31; 105-131; 176-193 AND 271-294</scope>
    <source>
        <tissue>Liver</tissue>
    </source>
</reference>
<reference key="13">
    <citation type="journal article" date="2000" name="Biochem. J.">
        <title>Human 3alpha-hydroxysteroid dehydrogenase isoforms (AKR1C1-AKR1C4) of the aldo-keto reductase superfamily: functional plasticity and tissue distribution reveals roles in the inactivation and formation of male and female sex hormones.</title>
        <authorList>
            <person name="Penning T.M."/>
            <person name="Burczynski M.E."/>
            <person name="Jez J.M."/>
            <person name="Hung C.F."/>
            <person name="Lin H.K."/>
            <person name="Ma H."/>
            <person name="Moore M."/>
            <person name="Palackal N."/>
            <person name="Ratnam K."/>
        </authorList>
    </citation>
    <scope>FUNCTION</scope>
    <scope>CATALYTIC ACTIVITY</scope>
    <scope>BIOPHYSICOCHEMICAL PROPERTIES</scope>
    <scope>SUBSTRATE SPECIFICITY</scope>
    <scope>TISSUE SPECIFICITY</scope>
</reference>
<reference key="14">
    <citation type="journal article" date="2004" name="J. Biol. Chem.">
        <title>Human cytosolic 3alpha-hydroxysteroid dehydrogenases of the aldo-keto reductase superfamily display significant 3beta-hydroxysteroid dehydrogenase activity: implications for steroid hormone metabolism and action.</title>
        <authorList>
            <person name="Steckelbroeck S."/>
            <person name="Jin Y."/>
            <person name="Gopishetty S."/>
            <person name="Oyesanmi B."/>
            <person name="Penning T.M."/>
        </authorList>
    </citation>
    <scope>FUNCTION</scope>
    <scope>CATALYTIC ACTIVITY</scope>
    <scope>PATHWAY</scope>
    <scope>ACTIVITY REGULATION</scope>
</reference>
<reference key="15">
    <citation type="journal article" date="2009" name="J. Biol. Chem.">
        <title>Human cytosolic hydroxysteroid dehydrogenases of the aldo-ketoreductase superfamily catalyze reduction of conjugated steroids: implications for phase I and phase II steroid hormone metabolism.</title>
        <authorList>
            <person name="Jin Y."/>
            <person name="Duan L."/>
            <person name="Lee S.H."/>
            <person name="Kloosterboer H.J."/>
            <person name="Blair I.A."/>
            <person name="Penning T.M."/>
        </authorList>
    </citation>
    <scope>FUNCTION</scope>
    <scope>CATALYTIC ACTIVITY</scope>
    <scope>BIOPHYSICOCHEMICAL PROPERTIES</scope>
</reference>
<reference key="16">
    <citation type="journal article" date="2003" name="J. Mol. Biol.">
        <title>Human 20alpha-hydroxysteroid dehydrogenase: crystallographic and site-directed mutagenesis studies lead to the identification of an alternative binding site for C21-steroids.</title>
        <authorList>
            <person name="Couture J.-F."/>
            <person name="Legrand P."/>
            <person name="Cantin L."/>
            <person name="Luu-The V."/>
            <person name="Labrie F."/>
            <person name="Breton R."/>
        </authorList>
    </citation>
    <scope>X-RAY CRYSTALLOGRAPHY (1.6 ANGSTROMS) IN COMPLEX WITH NADP AND 20ALPHA-HYDROXY-PROGESTERONE</scope>
    <scope>MUTAGENESIS OF GLU-127; HIS-222; ARG-304; TYR-305; THR-307 AND ASP-309</scope>
</reference>
<reference key="17">
    <citation type="journal article" date="2011" name="Bioorg. Med. Chem. Lett.">
        <title>Probing the inhibitor selectivity pocket of human 20alpha-hydroxysteroid dehydrogenase (AKR1C1) with X-ray crystallography and site-directed mutagenesis.</title>
        <authorList>
            <person name="El-Kabbani O."/>
            <person name="Dhagat U."/>
            <person name="Soda M."/>
            <person name="Endo S."/>
            <person name="Matsunaga T."/>
            <person name="Hara A."/>
        </authorList>
    </citation>
    <scope>X-RAY CRYSTALLOGRAPHY (1.87 ANGSTROMS) IN COMPLEX WITH NADP AND 3-CHLORO-5-PHENYLSALICYLIC ACID</scope>
</reference>
<gene>
    <name type="primary">AKR1C1</name>
    <name type="synonym">DDH</name>
    <name type="synonym">DDH1</name>
</gene>
<name>AK1C1_HUMAN</name>
<protein>
    <recommendedName>
        <fullName evidence="12">Aldo-keto reductase family 1 member C1</fullName>
        <ecNumber evidence="2 3 5 6 8 9">1.1.1.-</ecNumber>
        <ecNumber evidence="9">1.1.1.112</ecNumber>
        <ecNumber evidence="2">1.1.1.209</ecNumber>
        <ecNumber evidence="5 6">1.1.1.210</ecNumber>
        <ecNumber evidence="2 3">1.1.1.357</ecNumber>
        <ecNumber evidence="2">1.1.1.51</ecNumber>
        <ecNumber evidence="2">1.1.1.53</ecNumber>
        <ecNumber evidence="2">1.1.1.62</ecNumber>
        <ecNumber evidence="8 9">1.3.1.20</ecNumber>
    </recommendedName>
    <alternativeName>
        <fullName evidence="10">20-alpha-hydroxysteroid dehydrogenase</fullName>
        <shortName evidence="10">20-alpha-HSD</shortName>
        <ecNumber evidence="14">1.1.1.149</ecNumber>
    </alternativeName>
    <alternativeName>
        <fullName>Chlordecone reductase homolog HAKRC</fullName>
    </alternativeName>
    <alternativeName>
        <fullName evidence="11">Dihydrodiol dehydrogenase 1</fullName>
        <shortName evidence="11">DD1</shortName>
    </alternativeName>
    <alternativeName>
        <fullName>High-affinity hepatic bile acid-binding protein</fullName>
        <shortName>HBAB</shortName>
    </alternativeName>
</protein>
<evidence type="ECO:0000250" key="1"/>
<evidence type="ECO:0000269" key="2">
    <source>
    </source>
</evidence>
<evidence type="ECO:0000269" key="3">
    <source>
    </source>
</evidence>
<evidence type="ECO:0000269" key="4">
    <source>
    </source>
</evidence>
<evidence type="ECO:0000269" key="5">
    <source>
    </source>
</evidence>
<evidence type="ECO:0000269" key="6">
    <source>
    </source>
</evidence>
<evidence type="ECO:0000269" key="7">
    <source>
    </source>
</evidence>
<evidence type="ECO:0000269" key="8">
    <source>
    </source>
</evidence>
<evidence type="ECO:0000269" key="9">
    <source>
    </source>
</evidence>
<evidence type="ECO:0000303" key="10">
    <source>
    </source>
</evidence>
<evidence type="ECO:0000303" key="11">
    <source>
    </source>
</evidence>
<evidence type="ECO:0000305" key="12"/>
<evidence type="ECO:0000305" key="13">
    <source>
    </source>
</evidence>
<evidence type="ECO:0000305" key="14">
    <source>
    </source>
</evidence>
<evidence type="ECO:0007829" key="15">
    <source>
        <dbReference type="PDB" id="1MRQ"/>
    </source>
</evidence>
<evidence type="ECO:0007829" key="16">
    <source>
        <dbReference type="PDB" id="3C3U"/>
    </source>
</evidence>
<evidence type="ECO:0007829" key="17">
    <source>
        <dbReference type="PDB" id="3GUG"/>
    </source>
</evidence>
<evidence type="ECO:0007829" key="18">
    <source>
        <dbReference type="PDB" id="4YVP"/>
    </source>
</evidence>
<evidence type="ECO:0007829" key="19">
    <source>
        <dbReference type="PDB" id="6IJX"/>
    </source>
</evidence>
<keyword id="KW-0002">3D-structure</keyword>
<keyword id="KW-0963">Cytoplasm</keyword>
<keyword id="KW-0903">Direct protein sequencing</keyword>
<keyword id="KW-0443">Lipid metabolism</keyword>
<keyword id="KW-0521">NADP</keyword>
<keyword id="KW-0560">Oxidoreductase</keyword>
<keyword id="KW-1267">Proteomics identification</keyword>
<keyword id="KW-1185">Reference proteome</keyword>
<proteinExistence type="evidence at protein level"/>
<accession>Q04828</accession>
<accession>P52896</accession>
<accession>Q5SR15</accession>
<accession>Q7M4N2</accession>
<accession>Q9UCX2</accession>
<dbReference type="EC" id="1.1.1.-" evidence="2 3 5 6 8 9"/>
<dbReference type="EC" id="1.1.1.112" evidence="9"/>
<dbReference type="EC" id="1.1.1.209" evidence="2"/>
<dbReference type="EC" id="1.1.1.210" evidence="5 6"/>
<dbReference type="EC" id="1.1.1.357" evidence="2 3"/>
<dbReference type="EC" id="1.1.1.51" evidence="2"/>
<dbReference type="EC" id="1.1.1.53" evidence="2"/>
<dbReference type="EC" id="1.1.1.62" evidence="2"/>
<dbReference type="EC" id="1.3.1.20" evidence="8 9"/>
<dbReference type="EC" id="1.1.1.149" evidence="14"/>
<dbReference type="EMBL" id="M86609">
    <property type="protein sequence ID" value="AAB02880.1"/>
    <property type="molecule type" value="mRNA"/>
</dbReference>
<dbReference type="EMBL" id="U05861">
    <property type="protein sequence ID" value="AAA18115.1"/>
    <property type="molecule type" value="Genomic_DNA"/>
</dbReference>
<dbReference type="EMBL" id="U05853">
    <property type="protein sequence ID" value="AAA18115.1"/>
    <property type="status" value="JOINED"/>
    <property type="molecule type" value="Genomic_DNA"/>
</dbReference>
<dbReference type="EMBL" id="U05854">
    <property type="protein sequence ID" value="AAA18115.1"/>
    <property type="status" value="JOINED"/>
    <property type="molecule type" value="Genomic_DNA"/>
</dbReference>
<dbReference type="EMBL" id="U05855">
    <property type="protein sequence ID" value="AAA18115.1"/>
    <property type="status" value="JOINED"/>
    <property type="molecule type" value="Genomic_DNA"/>
</dbReference>
<dbReference type="EMBL" id="U05857">
    <property type="protein sequence ID" value="AAA18115.1"/>
    <property type="status" value="JOINED"/>
    <property type="molecule type" value="Genomic_DNA"/>
</dbReference>
<dbReference type="EMBL" id="U05858">
    <property type="protein sequence ID" value="AAA18115.1"/>
    <property type="status" value="JOINED"/>
    <property type="molecule type" value="Genomic_DNA"/>
</dbReference>
<dbReference type="EMBL" id="U05859">
    <property type="protein sequence ID" value="AAA18115.1"/>
    <property type="status" value="JOINED"/>
    <property type="molecule type" value="Genomic_DNA"/>
</dbReference>
<dbReference type="EMBL" id="U05860">
    <property type="protein sequence ID" value="AAA18115.1"/>
    <property type="status" value="JOINED"/>
    <property type="molecule type" value="Genomic_DNA"/>
</dbReference>
<dbReference type="EMBL" id="U05684">
    <property type="protein sequence ID" value="AAA16227.1"/>
    <property type="molecule type" value="mRNA"/>
</dbReference>
<dbReference type="EMBL" id="AB031083">
    <property type="protein sequence ID" value="BAA92883.1"/>
    <property type="molecule type" value="mRNA"/>
</dbReference>
<dbReference type="EMBL" id="AB032150">
    <property type="protein sequence ID" value="BAA92886.1"/>
    <property type="molecule type" value="Genomic_DNA"/>
</dbReference>
<dbReference type="EMBL" id="BT007197">
    <property type="protein sequence ID" value="AAP35861.1"/>
    <property type="molecule type" value="mRNA"/>
</dbReference>
<dbReference type="EMBL" id="AC091817">
    <property type="status" value="NOT_ANNOTATED_CDS"/>
    <property type="molecule type" value="Genomic_DNA"/>
</dbReference>
<dbReference type="EMBL" id="AL713867">
    <property type="status" value="NOT_ANNOTATED_CDS"/>
    <property type="molecule type" value="Genomic_DNA"/>
</dbReference>
<dbReference type="EMBL" id="BC015490">
    <property type="protein sequence ID" value="AAH15490.1"/>
    <property type="molecule type" value="mRNA"/>
</dbReference>
<dbReference type="EMBL" id="BC020216">
    <property type="protein sequence ID" value="AAH20216.1"/>
    <property type="molecule type" value="mRNA"/>
</dbReference>
<dbReference type="EMBL" id="BC040210">
    <property type="protein sequence ID" value="AAH40210.1"/>
    <property type="molecule type" value="mRNA"/>
</dbReference>
<dbReference type="EMBL" id="S68290">
    <property type="protein sequence ID" value="AAD14012.1"/>
    <property type="molecule type" value="mRNA"/>
</dbReference>
<dbReference type="EMBL" id="D26124">
    <property type="protein sequence ID" value="BAA05121.1"/>
    <property type="molecule type" value="mRNA"/>
</dbReference>
<dbReference type="CCDS" id="CCDS7061.1"/>
<dbReference type="PIR" id="A53436">
    <property type="entry name" value="A53436"/>
</dbReference>
<dbReference type="PIR" id="I73675">
    <property type="entry name" value="I73675"/>
</dbReference>
<dbReference type="PIR" id="S59619">
    <property type="entry name" value="S59619"/>
</dbReference>
<dbReference type="PIR" id="S61515">
    <property type="entry name" value="S61515"/>
</dbReference>
<dbReference type="RefSeq" id="NP_001344.2">
    <property type="nucleotide sequence ID" value="NM_001353.5"/>
</dbReference>
<dbReference type="PDB" id="1MRQ">
    <property type="method" value="X-ray"/>
    <property type="resolution" value="1.59 A"/>
    <property type="chains" value="A=2-323"/>
</dbReference>
<dbReference type="PDB" id="3C3U">
    <property type="method" value="X-ray"/>
    <property type="resolution" value="1.80 A"/>
    <property type="chains" value="A=1-323"/>
</dbReference>
<dbReference type="PDB" id="3GUG">
    <property type="method" value="X-ray"/>
    <property type="resolution" value="1.90 A"/>
    <property type="chains" value="A=1-323"/>
</dbReference>
<dbReference type="PDB" id="3NTY">
    <property type="method" value="X-ray"/>
    <property type="resolution" value="1.87 A"/>
    <property type="chains" value="A=1-323"/>
</dbReference>
<dbReference type="PDB" id="4YVP">
    <property type="method" value="X-ray"/>
    <property type="resolution" value="2.60 A"/>
    <property type="chains" value="A/B=1-323"/>
</dbReference>
<dbReference type="PDB" id="6A7A">
    <property type="method" value="X-ray"/>
    <property type="resolution" value="2.37 A"/>
    <property type="chains" value="A=1-323"/>
</dbReference>
<dbReference type="PDB" id="6IJX">
    <property type="method" value="X-ray"/>
    <property type="resolution" value="2.20 A"/>
    <property type="chains" value="A=1-323"/>
</dbReference>
<dbReference type="PDB" id="8JP2">
    <property type="method" value="X-ray"/>
    <property type="resolution" value="1.80 A"/>
    <property type="chains" value="A=1-323"/>
</dbReference>
<dbReference type="PDBsum" id="1MRQ"/>
<dbReference type="PDBsum" id="3C3U"/>
<dbReference type="PDBsum" id="3GUG"/>
<dbReference type="PDBsum" id="3NTY"/>
<dbReference type="PDBsum" id="4YVP"/>
<dbReference type="PDBsum" id="6A7A"/>
<dbReference type="PDBsum" id="6IJX"/>
<dbReference type="PDBsum" id="8JP2"/>
<dbReference type="SMR" id="Q04828"/>
<dbReference type="BioGRID" id="108012">
    <property type="interactions" value="28"/>
</dbReference>
<dbReference type="FunCoup" id="Q04828">
    <property type="interactions" value="272"/>
</dbReference>
<dbReference type="IntAct" id="Q04828">
    <property type="interactions" value="11"/>
</dbReference>
<dbReference type="MINT" id="Q04828"/>
<dbReference type="STRING" id="9606.ENSP00000370254"/>
<dbReference type="BindingDB" id="Q04828"/>
<dbReference type="ChEMBL" id="CHEMBL5905"/>
<dbReference type="DrugBank" id="DB04674">
    <property type="generic name" value="2-HYDROXY-3,5-DIIODOBENZOIC ACID"/>
</dbReference>
<dbReference type="DrugBank" id="DB00945">
    <property type="generic name" value="Acetylsalicylic acid"/>
</dbReference>
<dbReference type="DrugBank" id="DB07768">
    <property type="generic name" value="Epitestosterone"/>
</dbReference>
<dbReference type="DrugBank" id="DB01039">
    <property type="generic name" value="Fenofibrate"/>
</dbReference>
<dbReference type="DrugBank" id="DB07931">
    <property type="generic name" value="Hexestrol"/>
</dbReference>
<dbReference type="DrugBank" id="DB06077">
    <property type="generic name" value="Lumateperone"/>
</dbReference>
<dbReference type="DrugBank" id="DB00959">
    <property type="generic name" value="Methylprednisolone"/>
</dbReference>
<dbReference type="DrugBank" id="DB00461">
    <property type="generic name" value="Nabumetone"/>
</dbReference>
<dbReference type="DrugBank" id="DB00157">
    <property type="generic name" value="NADH"/>
</dbReference>
<dbReference type="DrugBank" id="DB03467">
    <property type="generic name" value="Naringenin"/>
</dbReference>
<dbReference type="DrugBank" id="DB03461">
    <property type="generic name" value="Nicotinamide adenine dinucleotide phosphate"/>
</dbReference>
<dbReference type="DrugBank" id="DB00776">
    <property type="generic name" value="Oxcarbazepine"/>
</dbReference>
<dbReference type="DrugBank" id="DB12612">
    <property type="generic name" value="Ozanimod"/>
</dbReference>
<dbReference type="DrugBank" id="DB00936">
    <property type="generic name" value="Salicylic acid"/>
</dbReference>
<dbReference type="DrugCentral" id="Q04828"/>
<dbReference type="SwissLipids" id="SLP:000000802"/>
<dbReference type="GlyGen" id="Q04828">
    <property type="glycosylation" value="1 site, 1 O-linked glycan (1 site)"/>
</dbReference>
<dbReference type="iPTMnet" id="Q04828"/>
<dbReference type="PhosphoSitePlus" id="Q04828"/>
<dbReference type="SwissPalm" id="Q04828"/>
<dbReference type="BioMuta" id="AKR1C1"/>
<dbReference type="DMDM" id="416877"/>
<dbReference type="jPOST" id="Q04828"/>
<dbReference type="MassIVE" id="Q04828"/>
<dbReference type="PaxDb" id="9606-ENSP00000370254"/>
<dbReference type="PeptideAtlas" id="Q04828"/>
<dbReference type="ProteomicsDB" id="58285"/>
<dbReference type="Pumba" id="Q04828"/>
<dbReference type="Antibodypedia" id="23969">
    <property type="antibodies" value="346 antibodies from 37 providers"/>
</dbReference>
<dbReference type="CPTC" id="Q04828">
    <property type="antibodies" value="2 antibodies"/>
</dbReference>
<dbReference type="DNASU" id="1645"/>
<dbReference type="Ensembl" id="ENST00000380872.9">
    <property type="protein sequence ID" value="ENSP00000370254.4"/>
    <property type="gene ID" value="ENSG00000187134.14"/>
</dbReference>
<dbReference type="GeneID" id="1645"/>
<dbReference type="KEGG" id="hsa:1645"/>
<dbReference type="MANE-Select" id="ENST00000380872.9">
    <property type="protein sequence ID" value="ENSP00000370254.4"/>
    <property type="RefSeq nucleotide sequence ID" value="NM_001353.6"/>
    <property type="RefSeq protein sequence ID" value="NP_001344.2"/>
</dbReference>
<dbReference type="UCSC" id="uc001ihq.4">
    <property type="organism name" value="human"/>
</dbReference>
<dbReference type="AGR" id="HGNC:384"/>
<dbReference type="CTD" id="1645"/>
<dbReference type="DisGeNET" id="1645"/>
<dbReference type="GeneCards" id="AKR1C1"/>
<dbReference type="HGNC" id="HGNC:384">
    <property type="gene designation" value="AKR1C1"/>
</dbReference>
<dbReference type="HPA" id="ENSG00000187134">
    <property type="expression patterns" value="Tissue enhanced (liver)"/>
</dbReference>
<dbReference type="MalaCards" id="AKR1C1"/>
<dbReference type="MIM" id="600449">
    <property type="type" value="gene"/>
</dbReference>
<dbReference type="neXtProt" id="NX_Q04828"/>
<dbReference type="OpenTargets" id="ENSG00000187134"/>
<dbReference type="PharmGKB" id="PA24677"/>
<dbReference type="VEuPathDB" id="HostDB:ENSG00000187134"/>
<dbReference type="eggNOG" id="KOG1577">
    <property type="taxonomic scope" value="Eukaryota"/>
</dbReference>
<dbReference type="GeneTree" id="ENSGT00940000163208"/>
<dbReference type="InParanoid" id="Q04828"/>
<dbReference type="OMA" id="WNNYHAK"/>
<dbReference type="OrthoDB" id="9508965at2759"/>
<dbReference type="PAN-GO" id="Q04828">
    <property type="GO annotations" value="9 GO annotations based on evolutionary models"/>
</dbReference>
<dbReference type="PhylomeDB" id="Q04828"/>
<dbReference type="TreeFam" id="TF106492"/>
<dbReference type="BioCyc" id="MetaCyc:HS10741-MONOMER"/>
<dbReference type="BRENDA" id="1.1.1.149">
    <property type="organism ID" value="2681"/>
</dbReference>
<dbReference type="BRENDA" id="1.1.1.270">
    <property type="organism ID" value="2681"/>
</dbReference>
<dbReference type="BRENDA" id="1.1.1.357">
    <property type="organism ID" value="2681"/>
</dbReference>
<dbReference type="BRENDA" id="1.1.1.50">
    <property type="organism ID" value="2681"/>
</dbReference>
<dbReference type="BRENDA" id="1.3.1.20">
    <property type="organism ID" value="2681"/>
</dbReference>
<dbReference type="PathwayCommons" id="Q04828"/>
<dbReference type="Reactome" id="R-HSA-193368">
    <property type="pathway name" value="Synthesis of bile acids and bile salts via 7alpha-hydroxycholesterol"/>
</dbReference>
<dbReference type="Reactome" id="R-HSA-193775">
    <property type="pathway name" value="Synthesis of bile acids and bile salts via 24-hydroxycholesterol"/>
</dbReference>
<dbReference type="Reactome" id="R-HSA-193807">
    <property type="pathway name" value="Synthesis of bile acids and bile salts via 27-hydroxycholesterol"/>
</dbReference>
<dbReference type="Reactome" id="R-HSA-975634">
    <property type="pathway name" value="Retinoid metabolism and transport"/>
</dbReference>
<dbReference type="Reactome" id="R-HSA-9757110">
    <property type="pathway name" value="Prednisone ADME"/>
</dbReference>
<dbReference type="SABIO-RK" id="Q04828"/>
<dbReference type="SignaLink" id="Q04828"/>
<dbReference type="SIGNOR" id="Q04828"/>
<dbReference type="BioGRID-ORCS" id="1645">
    <property type="hits" value="14 hits in 1065 CRISPR screens"/>
</dbReference>
<dbReference type="CD-CODE" id="91857CE7">
    <property type="entry name" value="Nucleolus"/>
</dbReference>
<dbReference type="CD-CODE" id="FB4E32DD">
    <property type="entry name" value="Presynaptic clusters and postsynaptic densities"/>
</dbReference>
<dbReference type="ChiTaRS" id="AKR1C1">
    <property type="organism name" value="human"/>
</dbReference>
<dbReference type="EvolutionaryTrace" id="Q04828"/>
<dbReference type="GeneWiki" id="AKR1C1"/>
<dbReference type="GenomeRNAi" id="1645"/>
<dbReference type="Pharos" id="Q04828">
    <property type="development level" value="Tchem"/>
</dbReference>
<dbReference type="PRO" id="PR:Q04828"/>
<dbReference type="Proteomes" id="UP000005640">
    <property type="component" value="Chromosome 10"/>
</dbReference>
<dbReference type="RNAct" id="Q04828">
    <property type="molecule type" value="protein"/>
</dbReference>
<dbReference type="Bgee" id="ENSG00000187134">
    <property type="expression patterns" value="Expressed in islet of Langerhans and 99 other cell types or tissues"/>
</dbReference>
<dbReference type="ExpressionAtlas" id="Q04828">
    <property type="expression patterns" value="baseline and differential"/>
</dbReference>
<dbReference type="GO" id="GO:0005829">
    <property type="term" value="C:cytosol"/>
    <property type="evidence" value="ECO:0000314"/>
    <property type="project" value="UniProtKB"/>
</dbReference>
<dbReference type="GO" id="GO:0070062">
    <property type="term" value="C:extracellular exosome"/>
    <property type="evidence" value="ECO:0007005"/>
    <property type="project" value="UniProtKB"/>
</dbReference>
<dbReference type="GO" id="GO:0047006">
    <property type="term" value="F:17-alpha,20-alpha-dihydroxypregn-4-en-3-one dehydrogenase [NAD(P)+] activity"/>
    <property type="evidence" value="ECO:0007669"/>
    <property type="project" value="UniProtKB-EC"/>
</dbReference>
<dbReference type="GO" id="GO:0033703">
    <property type="term" value="F:3-beta-hydroxy-5-beta-steroid dehydrogenase (NADP+) activity"/>
    <property type="evidence" value="ECO:0007669"/>
    <property type="project" value="RHEA"/>
</dbReference>
<dbReference type="GO" id="GO:0047024">
    <property type="term" value="F:5-alpha-androstane-3-beta,17-beta-diol dehydrogenase (NADP+) activity"/>
    <property type="evidence" value="ECO:0007669"/>
    <property type="project" value="UniProtKB-EC"/>
</dbReference>
<dbReference type="GO" id="GO:0004033">
    <property type="term" value="F:aldo-keto reductase (NADPH) activity"/>
    <property type="evidence" value="ECO:0000304"/>
    <property type="project" value="UniProtKB"/>
</dbReference>
<dbReference type="GO" id="GO:0004032">
    <property type="term" value="F:aldose reductase (NADPH) activity"/>
    <property type="evidence" value="ECO:0000314"/>
    <property type="project" value="UniProtKB"/>
</dbReference>
<dbReference type="GO" id="GO:0047044">
    <property type="term" value="F:androstan-3-alpha,17-beta-diol dehydrogenase (NAD+) activity"/>
    <property type="evidence" value="ECO:0007669"/>
    <property type="project" value="UniProtKB-EC"/>
</dbReference>
<dbReference type="GO" id="GO:0047042">
    <property type="term" value="F:androsterone dehydrogenase (B-specific) activity"/>
    <property type="evidence" value="ECO:0000314"/>
    <property type="project" value="UniProtKB"/>
</dbReference>
<dbReference type="GO" id="GO:0047023">
    <property type="term" value="F:androsterone dehydrogenase [NAD(P)+] activity"/>
    <property type="evidence" value="ECO:0000318"/>
    <property type="project" value="GO_Central"/>
</dbReference>
<dbReference type="GO" id="GO:0032052">
    <property type="term" value="F:bile acid binding"/>
    <property type="evidence" value="ECO:0000314"/>
    <property type="project" value="UniProtKB"/>
</dbReference>
<dbReference type="GO" id="GO:0031406">
    <property type="term" value="F:carboxylic acid binding"/>
    <property type="evidence" value="ECO:0000314"/>
    <property type="project" value="UniProtKB"/>
</dbReference>
<dbReference type="GO" id="GO:0004303">
    <property type="term" value="F:estradiol 17-beta-dehydrogenase [NAD(P)+] activity"/>
    <property type="evidence" value="ECO:0007669"/>
    <property type="project" value="UniProtKB-EC"/>
</dbReference>
<dbReference type="GO" id="GO:0047718">
    <property type="term" value="F:indanol dehydrogenase activity"/>
    <property type="evidence" value="ECO:0007669"/>
    <property type="project" value="UniProtKB-EC"/>
</dbReference>
<dbReference type="GO" id="GO:0047086">
    <property type="term" value="F:ketosteroid monooxygenase activity"/>
    <property type="evidence" value="ECO:0000314"/>
    <property type="project" value="UniProtKB"/>
</dbReference>
<dbReference type="GO" id="GO:0016655">
    <property type="term" value="F:oxidoreductase activity, acting on NAD(P)H, quinone or similar compound as acceptor"/>
    <property type="evidence" value="ECO:0000314"/>
    <property type="project" value="UniProtKB"/>
</dbReference>
<dbReference type="GO" id="GO:0033764">
    <property type="term" value="F:steroid dehydrogenase activity, acting on the CH-OH group of donors, NAD or NADP as acceptor"/>
    <property type="evidence" value="ECO:0000304"/>
    <property type="project" value="Reactome"/>
</dbReference>
<dbReference type="GO" id="GO:0047045">
    <property type="term" value="F:testosterone 17-beta-dehydrogenase (NADP+) activity"/>
    <property type="evidence" value="ECO:0007669"/>
    <property type="project" value="RHEA"/>
</dbReference>
<dbReference type="GO" id="GO:0047115">
    <property type="term" value="F:trans-1,2-dihydrobenzene-1,2-diol dehydrogenase activity"/>
    <property type="evidence" value="ECO:0000314"/>
    <property type="project" value="UniProtKB"/>
</dbReference>
<dbReference type="GO" id="GO:0015721">
    <property type="term" value="P:bile acid and bile salt transport"/>
    <property type="evidence" value="ECO:0000304"/>
    <property type="project" value="UniProtKB"/>
</dbReference>
<dbReference type="GO" id="GO:0008206">
    <property type="term" value="P:bile acid metabolic process"/>
    <property type="evidence" value="ECO:0000314"/>
    <property type="project" value="UniProtKB"/>
</dbReference>
<dbReference type="GO" id="GO:0071395">
    <property type="term" value="P:cellular response to jasmonic acid stimulus"/>
    <property type="evidence" value="ECO:0000314"/>
    <property type="project" value="UniProtKB"/>
</dbReference>
<dbReference type="GO" id="GO:0042632">
    <property type="term" value="P:cholesterol homeostasis"/>
    <property type="evidence" value="ECO:0000304"/>
    <property type="project" value="UniProtKB"/>
</dbReference>
<dbReference type="GO" id="GO:0044597">
    <property type="term" value="P:daunorubicin metabolic process"/>
    <property type="evidence" value="ECO:0000315"/>
    <property type="project" value="UniProtKB"/>
</dbReference>
<dbReference type="GO" id="GO:0007586">
    <property type="term" value="P:digestion"/>
    <property type="evidence" value="ECO:0000314"/>
    <property type="project" value="UniProtKB"/>
</dbReference>
<dbReference type="GO" id="GO:0044598">
    <property type="term" value="P:doxorubicin metabolic process"/>
    <property type="evidence" value="ECO:0000315"/>
    <property type="project" value="UniProtKB"/>
</dbReference>
<dbReference type="GO" id="GO:0030855">
    <property type="term" value="P:epithelial cell differentiation"/>
    <property type="evidence" value="ECO:0000314"/>
    <property type="project" value="UniProtKB"/>
</dbReference>
<dbReference type="GO" id="GO:0030299">
    <property type="term" value="P:intestinal cholesterol absorption"/>
    <property type="evidence" value="ECO:0000304"/>
    <property type="project" value="UniProtKB"/>
</dbReference>
<dbReference type="GO" id="GO:2000379">
    <property type="term" value="P:positive regulation of reactive oxygen species metabolic process"/>
    <property type="evidence" value="ECO:0000314"/>
    <property type="project" value="UniProtKB"/>
</dbReference>
<dbReference type="GO" id="GO:0042448">
    <property type="term" value="P:progesterone metabolic process"/>
    <property type="evidence" value="ECO:0000314"/>
    <property type="project" value="UniProtKB"/>
</dbReference>
<dbReference type="GO" id="GO:0006693">
    <property type="term" value="P:prostaglandin metabolic process"/>
    <property type="evidence" value="ECO:0000318"/>
    <property type="project" value="GO_Central"/>
</dbReference>
<dbReference type="GO" id="GO:0042574">
    <property type="term" value="P:retinal metabolic process"/>
    <property type="evidence" value="ECO:0000314"/>
    <property type="project" value="UniProtKB"/>
</dbReference>
<dbReference type="GO" id="GO:0001523">
    <property type="term" value="P:retinoid metabolic process"/>
    <property type="evidence" value="ECO:0000304"/>
    <property type="project" value="Reactome"/>
</dbReference>
<dbReference type="GO" id="GO:0006805">
    <property type="term" value="P:xenobiotic metabolic process"/>
    <property type="evidence" value="ECO:0000304"/>
    <property type="project" value="Reactome"/>
</dbReference>
<dbReference type="CDD" id="cd19108">
    <property type="entry name" value="AKR_AKR1C1-35"/>
    <property type="match status" value="1"/>
</dbReference>
<dbReference type="FunFam" id="3.20.20.100:FF:000003">
    <property type="entry name" value="Aldo-keto reductase family 1 member C3"/>
    <property type="match status" value="1"/>
</dbReference>
<dbReference type="Gene3D" id="3.20.20.100">
    <property type="entry name" value="NADP-dependent oxidoreductase domain"/>
    <property type="match status" value="1"/>
</dbReference>
<dbReference type="InterPro" id="IPR020471">
    <property type="entry name" value="AKR"/>
</dbReference>
<dbReference type="InterPro" id="IPR044482">
    <property type="entry name" value="AKR1C"/>
</dbReference>
<dbReference type="InterPro" id="IPR018170">
    <property type="entry name" value="Aldo/ket_reductase_CS"/>
</dbReference>
<dbReference type="InterPro" id="IPR023210">
    <property type="entry name" value="NADP_OxRdtase_dom"/>
</dbReference>
<dbReference type="InterPro" id="IPR036812">
    <property type="entry name" value="NADP_OxRdtase_dom_sf"/>
</dbReference>
<dbReference type="PANTHER" id="PTHR11732">
    <property type="entry name" value="ALDO/KETO REDUCTASE"/>
    <property type="match status" value="1"/>
</dbReference>
<dbReference type="Pfam" id="PF00248">
    <property type="entry name" value="Aldo_ket_red"/>
    <property type="match status" value="1"/>
</dbReference>
<dbReference type="PIRSF" id="PIRSF000097">
    <property type="entry name" value="AKR"/>
    <property type="match status" value="1"/>
</dbReference>
<dbReference type="PRINTS" id="PR00069">
    <property type="entry name" value="ALDKETRDTASE"/>
</dbReference>
<dbReference type="SUPFAM" id="SSF51430">
    <property type="entry name" value="NAD(P)-linked oxidoreductase"/>
    <property type="match status" value="1"/>
</dbReference>
<dbReference type="PROSITE" id="PS00798">
    <property type="entry name" value="ALDOKETO_REDUCTASE_1"/>
    <property type="match status" value="1"/>
</dbReference>
<dbReference type="PROSITE" id="PS00062">
    <property type="entry name" value="ALDOKETO_REDUCTASE_2"/>
    <property type="match status" value="1"/>
</dbReference>
<dbReference type="PROSITE" id="PS00063">
    <property type="entry name" value="ALDOKETO_REDUCTASE_3"/>
    <property type="match status" value="1"/>
</dbReference>
<sequence>MDSKYQCVKLNDGHFMPVLGFGTYAPAEVPKSKALEATKLAIEAGFRHIDSAHLYNNEEQVGLAIRSKIADGSVKREDIFYTSKLWCNSHRPELVRPALERSLKNLQLDYVDLYLIHFPVSVKPGEEVIPKDENGKILFDTVDLCATWEAVEKCKDAGLAKSIGVSNFNRRQLEMILNKPGLKYKPVCNQVECHPYFNQRKLLDFCKSKDIVLVAYSALGSHREEPWVDPNSPVLLEDPVLCALAKKHKRTPALIALRYQLQRGVVVLAKSYNEQRIRQNVQVFEFQLTSEEMKAIDGLNRNVRYLTLDIFAGPPNYPFSDEY</sequence>
<organism>
    <name type="scientific">Homo sapiens</name>
    <name type="common">Human</name>
    <dbReference type="NCBI Taxonomy" id="9606"/>
    <lineage>
        <taxon>Eukaryota</taxon>
        <taxon>Metazoa</taxon>
        <taxon>Chordata</taxon>
        <taxon>Craniata</taxon>
        <taxon>Vertebrata</taxon>
        <taxon>Euteleostomi</taxon>
        <taxon>Mammalia</taxon>
        <taxon>Eutheria</taxon>
        <taxon>Euarchontoglires</taxon>
        <taxon>Primates</taxon>
        <taxon>Haplorrhini</taxon>
        <taxon>Catarrhini</taxon>
        <taxon>Hominidae</taxon>
        <taxon>Homo</taxon>
    </lineage>
</organism>
<feature type="chain" id="PRO_0000124633" description="Aldo-keto reductase family 1 member C1">
    <location>
        <begin position="1"/>
        <end position="323"/>
    </location>
</feature>
<feature type="active site" description="Proton donor" evidence="1">
    <location>
        <position position="55"/>
    </location>
</feature>
<feature type="binding site" evidence="4 7">
    <location>
        <begin position="20"/>
        <end position="24"/>
    </location>
    <ligand>
        <name>NADP(+)</name>
        <dbReference type="ChEBI" id="CHEBI:58349"/>
    </ligand>
</feature>
<feature type="binding site">
    <location>
        <position position="24"/>
    </location>
    <ligand>
        <name>substrate</name>
    </ligand>
</feature>
<feature type="binding site" evidence="4 7">
    <location>
        <position position="50"/>
    </location>
    <ligand>
        <name>NADP(+)</name>
        <dbReference type="ChEBI" id="CHEBI:58349"/>
    </ligand>
</feature>
<feature type="binding site" evidence="1">
    <location>
        <position position="117"/>
    </location>
    <ligand>
        <name>substrate</name>
    </ligand>
</feature>
<feature type="binding site" evidence="4 7">
    <location>
        <begin position="166"/>
        <end position="167"/>
    </location>
    <ligand>
        <name>NADP(+)</name>
        <dbReference type="ChEBI" id="CHEBI:58349"/>
    </ligand>
</feature>
<feature type="binding site" evidence="4 7">
    <location>
        <position position="190"/>
    </location>
    <ligand>
        <name>NADP(+)</name>
        <dbReference type="ChEBI" id="CHEBI:58349"/>
    </ligand>
</feature>
<feature type="binding site" evidence="4 7">
    <location>
        <begin position="216"/>
        <end position="222"/>
    </location>
    <ligand>
        <name>NADP(+)</name>
        <dbReference type="ChEBI" id="CHEBI:58349"/>
    </ligand>
</feature>
<feature type="binding site">
    <location>
        <position position="222"/>
    </location>
    <ligand>
        <name>substrate</name>
    </ligand>
</feature>
<feature type="binding site">
    <location>
        <position position="227"/>
    </location>
    <ligand>
        <name>substrate</name>
    </ligand>
</feature>
<feature type="binding site" evidence="4 7">
    <location>
        <begin position="270"/>
        <end position="280"/>
    </location>
    <ligand>
        <name>NADP(+)</name>
        <dbReference type="ChEBI" id="CHEBI:58349"/>
    </ligand>
</feature>
<feature type="site" description="Important for substrate specificity" evidence="1">
    <location>
        <position position="54"/>
    </location>
</feature>
<feature type="site" description="Lowers pKa of active site Tyr" evidence="1">
    <location>
        <position position="84"/>
    </location>
</feature>
<feature type="site" description="May be involved in the mediating step between the transformation of progesterone and the release of the cofactor">
    <location>
        <position position="222"/>
    </location>
</feature>
<feature type="sequence variant" id="VAR_048214" description="In dbSNP:rs139588200.">
    <original>R</original>
    <variation>H</variation>
    <location>
        <position position="170"/>
    </location>
</feature>
<feature type="sequence variant" id="VAR_048215" description="In dbSNP:rs760575583.">
    <original>Q</original>
    <variation>L</variation>
    <location>
        <position position="172"/>
    </location>
</feature>
<feature type="mutagenesis site" description="30-fold decrease in k(cat)/K(m) value for progesterone reduction; no effect on the K(m) value." evidence="4">
    <original>E</original>
    <variation>D</variation>
    <location>
        <position position="127"/>
    </location>
</feature>
<feature type="mutagenesis site" description="Marked decrease in k(cat)/K(m) value for progesterone; 24-fold decrease for progesterone reduction; 18-fold decrease for 20alpha-OHProg oxidation. 95-fold decrease in K(m) value for NADPH." evidence="4">
    <original>H</original>
    <variation>I</variation>
    <location>
        <position position="222"/>
    </location>
</feature>
<feature type="mutagenesis site" description="Marked decrease in k(cat)/K(m) value for progesterone; 10-fold decrease for progesterone reduction; 3-fold decrease for 20alpha-OHProg oxidation. 10-fold decrease in K(m) value for NADPH." evidence="4">
    <original>H</original>
    <variation>S</variation>
    <location>
        <position position="222"/>
    </location>
</feature>
<feature type="mutagenesis site" description="70-fold decrease in progesterone reduction. No effect on DHT reduction." evidence="4">
    <original>R</original>
    <variation>L</variation>
    <location>
        <position position="304"/>
    </location>
</feature>
<feature type="mutagenesis site" description="No effect on progesterone reduction." evidence="4">
    <original>Y</original>
    <variation>F</variation>
    <location>
        <position position="305"/>
    </location>
</feature>
<feature type="mutagenesis site" description="No effect on progesterone reduction." evidence="4">
    <original>T</original>
    <variation>V</variation>
    <location>
        <position position="307"/>
    </location>
</feature>
<feature type="mutagenesis site" description="No effect on progesterone reduction." evidence="4">
    <original>D</original>
    <variation>V</variation>
    <location>
        <position position="309"/>
    </location>
</feature>
<feature type="sequence conflict" description="In Ref. 4; no nucleotide entry." evidence="12" ref="4">
    <original>S</original>
    <variation>A</variation>
    <location>
        <position position="3"/>
    </location>
</feature>
<feature type="sequence conflict" description="In Ref. 4; no nucleotide entry and 10; AAD14012." evidence="12" ref="4 10">
    <original>V</original>
    <variation>D</variation>
    <location>
        <position position="95"/>
    </location>
</feature>
<feature type="sequence conflict" description="In Ref. 4; no nucleotide entry and 10; AAD14012." evidence="12" ref="4 10">
    <original>G</original>
    <variation>E</variation>
    <location>
        <position position="158"/>
    </location>
</feature>
<feature type="sequence conflict" description="In Ref. 4; no nucleotide entry and 10; AAD14012." evidence="12" ref="4 10">
    <original>RQ</original>
    <variation>ST</variation>
    <location>
        <begin position="171"/>
        <end position="172"/>
    </location>
</feature>
<feature type="sequence conflict" description="In Ref. 4; no nucleotide entry and 10; AAD14012." evidence="12" ref="4 10">
    <original>KY</original>
    <variation>QV</variation>
    <location>
        <begin position="183"/>
        <end position="184"/>
    </location>
</feature>
<feature type="sequence conflict" description="In Ref. 4; no nucleotide entry and 10; AAD14012." evidence="12" ref="4 10">
    <original>H</original>
    <variation>L</variation>
    <location>
        <position position="222"/>
    </location>
</feature>
<feature type="sequence conflict" description="In Ref. 4; no nucleotide entry and 10; AAD14012." evidence="12" ref="4 10">
    <original>F</original>
    <variation>I</variation>
    <location>
        <position position="319"/>
    </location>
</feature>
<feature type="strand" evidence="15">
    <location>
        <begin position="7"/>
        <end position="9"/>
    </location>
</feature>
<feature type="strand" evidence="15">
    <location>
        <begin position="15"/>
        <end position="22"/>
    </location>
</feature>
<feature type="helix" evidence="15">
    <location>
        <begin position="33"/>
        <end position="44"/>
    </location>
</feature>
<feature type="strand" evidence="15">
    <location>
        <begin position="48"/>
        <end position="50"/>
    </location>
</feature>
<feature type="helix" evidence="15">
    <location>
        <begin position="53"/>
        <end position="55"/>
    </location>
</feature>
<feature type="helix" evidence="15">
    <location>
        <begin position="58"/>
        <end position="70"/>
    </location>
</feature>
<feature type="helix" evidence="15">
    <location>
        <begin position="76"/>
        <end position="78"/>
    </location>
</feature>
<feature type="strand" evidence="15">
    <location>
        <begin position="80"/>
        <end position="85"/>
    </location>
</feature>
<feature type="helix" evidence="15">
    <location>
        <begin position="87"/>
        <end position="89"/>
    </location>
</feature>
<feature type="helix" evidence="15">
    <location>
        <begin position="92"/>
        <end position="106"/>
    </location>
</feature>
<feature type="strand" evidence="15">
    <location>
        <begin position="111"/>
        <end position="116"/>
    </location>
</feature>
<feature type="strand" evidence="16">
    <location>
        <begin position="124"/>
        <end position="126"/>
    </location>
</feature>
<feature type="strand" evidence="18">
    <location>
        <begin position="133"/>
        <end position="135"/>
    </location>
</feature>
<feature type="helix" evidence="15">
    <location>
        <begin position="144"/>
        <end position="156"/>
    </location>
</feature>
<feature type="strand" evidence="15">
    <location>
        <begin position="159"/>
        <end position="167"/>
    </location>
</feature>
<feature type="helix" evidence="15">
    <location>
        <begin position="170"/>
        <end position="177"/>
    </location>
</feature>
<feature type="strand" evidence="15">
    <location>
        <begin position="187"/>
        <end position="192"/>
    </location>
</feature>
<feature type="strand" evidence="17">
    <location>
        <begin position="194"/>
        <end position="197"/>
    </location>
</feature>
<feature type="helix" evidence="15">
    <location>
        <begin position="200"/>
        <end position="208"/>
    </location>
</feature>
<feature type="strand" evidence="15">
    <location>
        <begin position="212"/>
        <end position="217"/>
    </location>
</feature>
<feature type="turn" evidence="15">
    <location>
        <begin position="225"/>
        <end position="227"/>
    </location>
</feature>
<feature type="helix" evidence="15">
    <location>
        <begin position="235"/>
        <end position="237"/>
    </location>
</feature>
<feature type="helix" evidence="15">
    <location>
        <begin position="239"/>
        <end position="248"/>
    </location>
</feature>
<feature type="helix" evidence="15">
    <location>
        <begin position="252"/>
        <end position="262"/>
    </location>
</feature>
<feature type="strand" evidence="15">
    <location>
        <begin position="266"/>
        <end position="270"/>
    </location>
</feature>
<feature type="helix" evidence="15">
    <location>
        <begin position="274"/>
        <end position="280"/>
    </location>
</feature>
<feature type="helix" evidence="15">
    <location>
        <begin position="281"/>
        <end position="285"/>
    </location>
</feature>
<feature type="helix" evidence="15">
    <location>
        <begin position="290"/>
        <end position="297"/>
    </location>
</feature>
<feature type="helix" evidence="15">
    <location>
        <begin position="309"/>
        <end position="311"/>
    </location>
</feature>
<feature type="helix" evidence="19">
    <location>
        <begin position="318"/>
        <end position="320"/>
    </location>
</feature>